<name>IL15_MOUSE</name>
<dbReference type="EMBL" id="U14332">
    <property type="protein sequence ID" value="AAA75377.1"/>
    <property type="molecule type" value="mRNA"/>
</dbReference>
<dbReference type="EMBL" id="BC023698">
    <property type="protein sequence ID" value="AAH23698.1"/>
    <property type="molecule type" value="mRNA"/>
</dbReference>
<dbReference type="CCDS" id="CCDS40401.1"/>
<dbReference type="PIR" id="I49124">
    <property type="entry name" value="I49124"/>
</dbReference>
<dbReference type="RefSeq" id="NP_001241676.1">
    <property type="nucleotide sequence ID" value="NM_001254747.2"/>
</dbReference>
<dbReference type="RefSeq" id="NP_032383.1">
    <property type="nucleotide sequence ID" value="NM_008357.3"/>
</dbReference>
<dbReference type="RefSeq" id="XP_006530768.1">
    <property type="nucleotide sequence ID" value="XM_006530705.5"/>
</dbReference>
<dbReference type="RefSeq" id="XP_006530769.1">
    <property type="nucleotide sequence ID" value="XM_006530706.5"/>
</dbReference>
<dbReference type="RefSeq" id="XP_006530770.1">
    <property type="nucleotide sequence ID" value="XM_006530707.5"/>
</dbReference>
<dbReference type="RefSeq" id="XP_006530771.1">
    <property type="nucleotide sequence ID" value="XM_006530708.5"/>
</dbReference>
<dbReference type="RefSeq" id="XP_006530772.1">
    <property type="nucleotide sequence ID" value="XM_006530709.4"/>
</dbReference>
<dbReference type="RefSeq" id="XP_006530773.1">
    <property type="nucleotide sequence ID" value="XM_006530710.3"/>
</dbReference>
<dbReference type="RefSeq" id="XP_006530774.1">
    <property type="nucleotide sequence ID" value="XM_006530711.5"/>
</dbReference>
<dbReference type="RefSeq" id="XP_006530775.1">
    <property type="nucleotide sequence ID" value="XM_006530712.5"/>
</dbReference>
<dbReference type="RefSeq" id="XP_006530776.1">
    <property type="nucleotide sequence ID" value="XM_006530713.5"/>
</dbReference>
<dbReference type="RefSeq" id="XP_011246614.1">
    <property type="nucleotide sequence ID" value="XM_011248312.4"/>
</dbReference>
<dbReference type="RefSeq" id="XP_011246615.1">
    <property type="nucleotide sequence ID" value="XM_011248313.4"/>
</dbReference>
<dbReference type="RefSeq" id="XP_011246616.1">
    <property type="nucleotide sequence ID" value="XM_011248314.4"/>
</dbReference>
<dbReference type="RefSeq" id="XP_036009658.1">
    <property type="nucleotide sequence ID" value="XM_036153765.1"/>
</dbReference>
<dbReference type="PDB" id="2PSM">
    <property type="method" value="X-ray"/>
    <property type="resolution" value="2.19 A"/>
    <property type="chains" value="A/B=49-162"/>
</dbReference>
<dbReference type="PDBsum" id="2PSM"/>
<dbReference type="SMR" id="P48346"/>
<dbReference type="CORUM" id="P48346"/>
<dbReference type="FunCoup" id="P48346">
    <property type="interactions" value="761"/>
</dbReference>
<dbReference type="STRING" id="10090.ENSMUSP00000034148"/>
<dbReference type="BindingDB" id="P48346"/>
<dbReference type="ChEMBL" id="CHEMBL4879439"/>
<dbReference type="GlyCosmos" id="P48346">
    <property type="glycosylation" value="3 sites, No reported glycans"/>
</dbReference>
<dbReference type="GlyGen" id="P48346">
    <property type="glycosylation" value="3 sites"/>
</dbReference>
<dbReference type="PhosphoSitePlus" id="P48346"/>
<dbReference type="PaxDb" id="10090-ENSMUSP00000034148"/>
<dbReference type="ProteomicsDB" id="267121"/>
<dbReference type="Antibodypedia" id="3844">
    <property type="antibodies" value="1223 antibodies from 43 providers"/>
</dbReference>
<dbReference type="DNASU" id="16168"/>
<dbReference type="Ensembl" id="ENSMUST00000034148.7">
    <property type="protein sequence ID" value="ENSMUSP00000034148.7"/>
    <property type="gene ID" value="ENSMUSG00000031712.11"/>
</dbReference>
<dbReference type="Ensembl" id="ENSMUST00000209363.2">
    <property type="protein sequence ID" value="ENSMUSP00000147848.2"/>
    <property type="gene ID" value="ENSMUSG00000031712.11"/>
</dbReference>
<dbReference type="Ensembl" id="ENSMUST00000209573.3">
    <property type="protein sequence ID" value="ENSMUSP00000148256.3"/>
    <property type="gene ID" value="ENSMUSG00000031712.11"/>
</dbReference>
<dbReference type="GeneID" id="16168"/>
<dbReference type="KEGG" id="mmu:16168"/>
<dbReference type="UCSC" id="uc009mjk.2">
    <property type="organism name" value="mouse"/>
</dbReference>
<dbReference type="AGR" id="MGI:103014"/>
<dbReference type="CTD" id="3600"/>
<dbReference type="MGI" id="MGI:103014">
    <property type="gene designation" value="Il15"/>
</dbReference>
<dbReference type="VEuPathDB" id="HostDB:ENSMUSG00000031712"/>
<dbReference type="eggNOG" id="ENOG502SCMF">
    <property type="taxonomic scope" value="Eukaryota"/>
</dbReference>
<dbReference type="GeneTree" id="ENSGT00390000016264"/>
<dbReference type="HOGENOM" id="CLU_135111_0_0_1"/>
<dbReference type="InParanoid" id="P48346"/>
<dbReference type="OMA" id="FVWGCIS"/>
<dbReference type="OrthoDB" id="8905762at2759"/>
<dbReference type="PhylomeDB" id="P48346"/>
<dbReference type="TreeFam" id="TF336199"/>
<dbReference type="Reactome" id="R-MMU-8983432">
    <property type="pathway name" value="Interleukin-15 signaling"/>
</dbReference>
<dbReference type="BioGRID-ORCS" id="16168">
    <property type="hits" value="1 hit in 77 CRISPR screens"/>
</dbReference>
<dbReference type="ChiTaRS" id="Il15">
    <property type="organism name" value="mouse"/>
</dbReference>
<dbReference type="EvolutionaryTrace" id="P48346"/>
<dbReference type="PRO" id="PR:P48346"/>
<dbReference type="Proteomes" id="UP000000589">
    <property type="component" value="Chromosome 8"/>
</dbReference>
<dbReference type="RNAct" id="P48346">
    <property type="molecule type" value="protein"/>
</dbReference>
<dbReference type="Bgee" id="ENSMUSG00000031712">
    <property type="expression patterns" value="Expressed in granulocyte and 141 other cell types or tissues"/>
</dbReference>
<dbReference type="ExpressionAtlas" id="P48346">
    <property type="expression patterns" value="baseline and differential"/>
</dbReference>
<dbReference type="GO" id="GO:0005737">
    <property type="term" value="C:cytoplasm"/>
    <property type="evidence" value="ECO:0000314"/>
    <property type="project" value="MGI"/>
</dbReference>
<dbReference type="GO" id="GO:0005829">
    <property type="term" value="C:cytosol"/>
    <property type="evidence" value="ECO:0007669"/>
    <property type="project" value="Ensembl"/>
</dbReference>
<dbReference type="GO" id="GO:0005576">
    <property type="term" value="C:extracellular region"/>
    <property type="evidence" value="ECO:0000304"/>
    <property type="project" value="Reactome"/>
</dbReference>
<dbReference type="GO" id="GO:0005615">
    <property type="term" value="C:extracellular space"/>
    <property type="evidence" value="ECO:0007669"/>
    <property type="project" value="UniProtKB-KW"/>
</dbReference>
<dbReference type="GO" id="GO:0016607">
    <property type="term" value="C:nuclear speck"/>
    <property type="evidence" value="ECO:0007669"/>
    <property type="project" value="Ensembl"/>
</dbReference>
<dbReference type="GO" id="GO:0005125">
    <property type="term" value="F:cytokine activity"/>
    <property type="evidence" value="ECO:0000314"/>
    <property type="project" value="MGI"/>
</dbReference>
<dbReference type="GO" id="GO:0005126">
    <property type="term" value="F:cytokine receptor binding"/>
    <property type="evidence" value="ECO:0007669"/>
    <property type="project" value="InterPro"/>
</dbReference>
<dbReference type="GO" id="GO:0048469">
    <property type="term" value="P:cell maturation"/>
    <property type="evidence" value="ECO:0000316"/>
    <property type="project" value="MGI"/>
</dbReference>
<dbReference type="GO" id="GO:0045062">
    <property type="term" value="P:extrathymic T cell selection"/>
    <property type="evidence" value="ECO:0000315"/>
    <property type="project" value="MGI"/>
</dbReference>
<dbReference type="GO" id="GO:0006955">
    <property type="term" value="P:immune response"/>
    <property type="evidence" value="ECO:0007669"/>
    <property type="project" value="InterPro"/>
</dbReference>
<dbReference type="GO" id="GO:0035723">
    <property type="term" value="P:interleukin-15-mediated signaling pathway"/>
    <property type="evidence" value="ECO:0000250"/>
    <property type="project" value="UniProtKB"/>
</dbReference>
<dbReference type="GO" id="GO:0048535">
    <property type="term" value="P:lymph node development"/>
    <property type="evidence" value="ECO:0000315"/>
    <property type="project" value="MGI"/>
</dbReference>
<dbReference type="GO" id="GO:0030225">
    <property type="term" value="P:macrophage differentiation"/>
    <property type="evidence" value="ECO:0007669"/>
    <property type="project" value="Ensembl"/>
</dbReference>
<dbReference type="GO" id="GO:0001779">
    <property type="term" value="P:natural killer cell differentiation"/>
    <property type="evidence" value="ECO:0000314"/>
    <property type="project" value="MGI"/>
</dbReference>
<dbReference type="GO" id="GO:0001787">
    <property type="term" value="P:natural killer cell proliferation"/>
    <property type="evidence" value="ECO:0000314"/>
    <property type="project" value="MGI"/>
</dbReference>
<dbReference type="GO" id="GO:0120163">
    <property type="term" value="P:negative regulation of cold-induced thermogenesis"/>
    <property type="evidence" value="ECO:0000315"/>
    <property type="project" value="YuBioLab"/>
</dbReference>
<dbReference type="GO" id="GO:0042119">
    <property type="term" value="P:neutrophil activation"/>
    <property type="evidence" value="ECO:0000250"/>
    <property type="project" value="UniProtKB"/>
</dbReference>
<dbReference type="GO" id="GO:0001866">
    <property type="term" value="P:NK T cell proliferation"/>
    <property type="evidence" value="ECO:0000315"/>
    <property type="project" value="MGI"/>
</dbReference>
<dbReference type="GO" id="GO:0050778">
    <property type="term" value="P:positive regulation of immune response"/>
    <property type="evidence" value="ECO:0000315"/>
    <property type="project" value="MGI"/>
</dbReference>
<dbReference type="GO" id="GO:0032740">
    <property type="term" value="P:positive regulation of interleukin-17 production"/>
    <property type="evidence" value="ECO:0007669"/>
    <property type="project" value="Ensembl"/>
</dbReference>
<dbReference type="GO" id="GO:0032825">
    <property type="term" value="P:positive regulation of natural killer cell differentiation"/>
    <property type="evidence" value="ECO:0000314"/>
    <property type="project" value="MGI"/>
</dbReference>
<dbReference type="GO" id="GO:0032819">
    <property type="term" value="P:positive regulation of natural killer cell proliferation"/>
    <property type="evidence" value="ECO:0000314"/>
    <property type="project" value="MGI"/>
</dbReference>
<dbReference type="GO" id="GO:0050731">
    <property type="term" value="P:positive regulation of peptidyl-tyrosine phosphorylation"/>
    <property type="evidence" value="ECO:0000250"/>
    <property type="project" value="UniProtKB"/>
</dbReference>
<dbReference type="GO" id="GO:0050766">
    <property type="term" value="P:positive regulation of phagocytosis"/>
    <property type="evidence" value="ECO:0000250"/>
    <property type="project" value="UniProtKB"/>
</dbReference>
<dbReference type="GO" id="GO:0042102">
    <property type="term" value="P:positive regulation of T cell proliferation"/>
    <property type="evidence" value="ECO:0000315"/>
    <property type="project" value="MGI"/>
</dbReference>
<dbReference type="GO" id="GO:0050691">
    <property type="term" value="P:regulation of defense response to virus by host"/>
    <property type="evidence" value="ECO:0000315"/>
    <property type="project" value="MGI"/>
</dbReference>
<dbReference type="GO" id="GO:0045580">
    <property type="term" value="P:regulation of T cell differentiation"/>
    <property type="evidence" value="ECO:0000315"/>
    <property type="project" value="MGI"/>
</dbReference>
<dbReference type="FunFam" id="1.20.1250.70:FF:000001">
    <property type="entry name" value="Interleukin"/>
    <property type="match status" value="1"/>
</dbReference>
<dbReference type="Gene3D" id="1.20.1250.70">
    <property type="entry name" value="Interleukin-15/Interleukin-21"/>
    <property type="match status" value="1"/>
</dbReference>
<dbReference type="InterPro" id="IPR009079">
    <property type="entry name" value="4_helix_cytokine-like_core"/>
</dbReference>
<dbReference type="InterPro" id="IPR020439">
    <property type="entry name" value="IL-15"/>
</dbReference>
<dbReference type="InterPro" id="IPR003443">
    <property type="entry name" value="IL-15/IL-21_fam"/>
</dbReference>
<dbReference type="InterPro" id="IPR020466">
    <property type="entry name" value="IL-15_mml"/>
</dbReference>
<dbReference type="PANTHER" id="PTHR14356:SF3">
    <property type="entry name" value="INTERLEUKIN-15"/>
    <property type="match status" value="1"/>
</dbReference>
<dbReference type="PANTHER" id="PTHR14356">
    <property type="entry name" value="INTERLEUKIN-15-RELATED"/>
    <property type="match status" value="1"/>
</dbReference>
<dbReference type="Pfam" id="PF02372">
    <property type="entry name" value="IL15"/>
    <property type="match status" value="1"/>
</dbReference>
<dbReference type="PRINTS" id="PR01947">
    <property type="entry name" value="INTLKN15MAML"/>
</dbReference>
<dbReference type="PRINTS" id="PR01930">
    <property type="entry name" value="INTRLEUKIN15"/>
</dbReference>
<dbReference type="SUPFAM" id="SSF47266">
    <property type="entry name" value="4-helical cytokines"/>
    <property type="match status" value="1"/>
</dbReference>
<proteinExistence type="evidence at protein level"/>
<reference key="1">
    <citation type="journal article" date="1995" name="Genomics">
        <title>Chromosomal assignment and genomic structure of IL15.</title>
        <authorList>
            <person name="Anderson D.M."/>
            <person name="Johnson L."/>
            <person name="Glaccum M.B."/>
            <person name="Copeland N.G."/>
            <person name="Gilbert D.J."/>
            <person name="Jenkins N.A."/>
            <person name="Valentine V."/>
            <person name="Kirstein M.N."/>
            <person name="Shapiro D.N."/>
            <person name="Morris S.W."/>
            <person name="Grabstein K."/>
            <person name="Cosman D."/>
        </authorList>
    </citation>
    <scope>NUCLEOTIDE SEQUENCE [MRNA]</scope>
    <source>
        <strain>WC/REJ X C57BL/6J</strain>
        <tissue>Bone marrow</tissue>
    </source>
</reference>
<reference key="2">
    <citation type="journal article" date="2004" name="Genome Res.">
        <title>The status, quality, and expansion of the NIH full-length cDNA project: the Mammalian Gene Collection (MGC).</title>
        <authorList>
            <consortium name="The MGC Project Team"/>
        </authorList>
    </citation>
    <scope>NUCLEOTIDE SEQUENCE [LARGE SCALE MRNA]</scope>
    <source>
        <strain>FVB/N</strain>
        <tissue>Mammary gland</tissue>
    </source>
</reference>
<reference key="3">
    <citation type="journal article" date="1996" name="J. Immunol.">
        <title>IL-15 augments CD8+ T cell-mediated immunity against Toxoplasma gondii infection in mice.</title>
        <authorList>
            <person name="Khan I.A."/>
            <person name="Kasper L.H."/>
        </authorList>
    </citation>
    <scope>FUNCTION</scope>
</reference>
<reference key="4">
    <citation type="journal article" date="2000" name="J. Biol. Chem.">
        <title>Interleukin-15 induces rapid tyrosine phosphorylation of STAT6 and the expression of interleukin-4 in mouse mast cells.</title>
        <authorList>
            <person name="Masuda A."/>
            <person name="Matsuguchi T."/>
            <person name="Yamaki K."/>
            <person name="Hayakawa T."/>
            <person name="Kubo M."/>
            <person name="LaRochelle W.J."/>
            <person name="Yoshikai Y."/>
        </authorList>
    </citation>
    <scope>FUNCTION</scope>
</reference>
<reference key="5">
    <citation type="journal article" date="2001" name="J. Immunol.">
        <title>IL-15 is expressed by dendritic cells in response to type I IFN, double-stranded RNA, or lipopolysaccharide and promotes dendritic cell activation.</title>
        <authorList>
            <person name="Mattei F."/>
            <person name="Schiavoni G."/>
            <person name="Belardelli F."/>
            <person name="Tough D.F."/>
        </authorList>
    </citation>
    <scope>FUNCTION</scope>
    <scope>INDUCTION BY TYPE I INTERFERONS; DOUBLE-STRANDED RNA OR LIPOPOLYSACCHARIDES</scope>
</reference>
<reference key="6">
    <citation type="journal article" date="2009" name="Exp. Cell Res.">
        <title>Intracellular IL-15 controls mast cell survival.</title>
        <authorList>
            <person name="Mirghomizadeh F."/>
            <person name="Winoto-Morbach S."/>
            <person name="Orinska Z."/>
            <person name="Lee K.H."/>
            <person name="Schuetze S."/>
            <person name="Bulfone-Paus S."/>
        </authorList>
    </citation>
    <scope>FUNCTION</scope>
</reference>
<reference key="7">
    <citation type="journal article" date="2007" name="J. Biol. Chem.">
        <title>Crystal Structure of the interleukin-15.interleukin-15 receptor alpha complex: insights into trans and cis presentation.</title>
        <authorList>
            <person name="Olsen S.K."/>
            <person name="Ota N."/>
            <person name="Kishishita S."/>
            <person name="Kukimoto-Niino M."/>
            <person name="Murayama K."/>
            <person name="Uchiyama H."/>
            <person name="Toyama M."/>
            <person name="Terada T."/>
            <person name="Shirouzu M."/>
            <person name="Kanagawa O."/>
            <person name="Yokoyama S."/>
        </authorList>
    </citation>
    <scope>X-RAY CRYSTALLOGRAPHY (2.19 ANGSTROMS) OF 42-162 IN COMPLEX WITH IL15RA</scope>
    <scope>DISULFIDE BONDS</scope>
</reference>
<sequence length="162" mass="18593">MKILKPYMRNTSISCYLCFLLNSHFLTEAGIHVFILGCVSVGLPKTEANWIDVRYDLEKIESLIQSIHIDTTLYTDSDFHPSCKVTAMNCFLLELQVILHEYSNMTLNETVRNVLYLANSTLSSNKNVAESGCKECEELEEKTFTEFLQSFIRIVQMFINTS</sequence>
<comment type="function">
    <text evidence="1 3 4 6 7">Cytokine that plays a major role in the development of inflammatory and protective immune responses to microbial invaders and parasites by modulating immune cells of both the innate and adaptive immune systems (PubMed:11466332, PubMed:8757333). Stimulates the proliferation and activation of natural killer cells, T-cells and B-cells and promotes the secretion of several cytokines (PubMed:8757333). In monocytes, induces the production of IL8 and monocyte chemotactic protein 1/CCL2, two chemokines that attract neutrophils and monocytes respectively to sites of infection (By similarity). Unlike most cytokines, which are secreted in soluble form, IL15 is expressed in association with its high affinity IL15RA on the surface of IL15-producing cells and delivers signals to target cells that express IL2RB and IL2RG receptor subunits. Binding to its receptor triggers the phosphorylation of JAK1 and JAK3 and the recruitment and subsequent phosphorylation of signal transducer and activator of transcription-3/STAT3 and STAT5. In mast cells, induces the rapid tyrosine phosphorylation of STAT6 and thereby controls mast cell survival and release of cytokines such as IL4 (PubMed:10882748, PubMed:19632221).</text>
</comment>
<comment type="subcellular location">
    <subcellularLocation>
        <location>Secreted</location>
    </subcellularLocation>
</comment>
<comment type="induction">
    <text evidence="4">By type I interferons, double-stranded RNA, or lipopolysaccharides.</text>
</comment>
<comment type="similarity">
    <text evidence="8">Belongs to the IL-15/IL-21 family.</text>
</comment>
<feature type="signal peptide" evidence="2">
    <location>
        <begin position="1"/>
        <end position="29"/>
    </location>
</feature>
<feature type="propeptide" id="PRO_0000015399" evidence="2">
    <location>
        <begin position="30"/>
        <end position="48"/>
    </location>
</feature>
<feature type="chain" id="PRO_0000015400" description="Interleukin-15">
    <location>
        <begin position="49"/>
        <end position="162"/>
    </location>
</feature>
<feature type="glycosylation site" description="N-linked (GlcNAc...) asparagine" evidence="2">
    <location>
        <position position="104"/>
    </location>
</feature>
<feature type="glycosylation site" description="N-linked (GlcNAc...) asparagine" evidence="2">
    <location>
        <position position="108"/>
    </location>
</feature>
<feature type="glycosylation site" description="N-linked (GlcNAc...) asparagine" evidence="2">
    <location>
        <position position="119"/>
    </location>
</feature>
<feature type="disulfide bond" evidence="5">
    <location>
        <begin position="83"/>
        <end position="133"/>
    </location>
</feature>
<feature type="disulfide bond" evidence="5">
    <location>
        <begin position="90"/>
        <end position="136"/>
    </location>
</feature>
<feature type="helix" evidence="9">
    <location>
        <begin position="49"/>
        <end position="63"/>
    </location>
</feature>
<feature type="helix" evidence="9">
    <location>
        <begin position="64"/>
        <end position="66"/>
    </location>
</feature>
<feature type="strand" evidence="9">
    <location>
        <begin position="72"/>
        <end position="75"/>
    </location>
</feature>
<feature type="helix" evidence="9">
    <location>
        <begin position="81"/>
        <end position="83"/>
    </location>
</feature>
<feature type="helix" evidence="9">
    <location>
        <begin position="84"/>
        <end position="101"/>
    </location>
</feature>
<feature type="helix" evidence="9">
    <location>
        <begin position="105"/>
        <end position="124"/>
    </location>
</feature>
<feature type="helix" evidence="9">
    <location>
        <begin position="136"/>
        <end position="138"/>
    </location>
</feature>
<feature type="strand" evidence="9">
    <location>
        <begin position="139"/>
        <end position="143"/>
    </location>
</feature>
<feature type="helix" evidence="9">
    <location>
        <begin position="144"/>
        <end position="160"/>
    </location>
</feature>
<keyword id="KW-0002">3D-structure</keyword>
<keyword id="KW-0202">Cytokine</keyword>
<keyword id="KW-1015">Disulfide bond</keyword>
<keyword id="KW-0325">Glycoprotein</keyword>
<keyword id="KW-1185">Reference proteome</keyword>
<keyword id="KW-0964">Secreted</keyword>
<keyword id="KW-0732">Signal</keyword>
<evidence type="ECO:0000250" key="1">
    <source>
        <dbReference type="UniProtKB" id="P40933"/>
    </source>
</evidence>
<evidence type="ECO:0000255" key="2"/>
<evidence type="ECO:0000269" key="3">
    <source>
    </source>
</evidence>
<evidence type="ECO:0000269" key="4">
    <source>
    </source>
</evidence>
<evidence type="ECO:0000269" key="5">
    <source>
    </source>
</evidence>
<evidence type="ECO:0000269" key="6">
    <source>
    </source>
</evidence>
<evidence type="ECO:0000269" key="7">
    <source>
    </source>
</evidence>
<evidence type="ECO:0000305" key="8"/>
<evidence type="ECO:0007829" key="9">
    <source>
        <dbReference type="PDB" id="2PSM"/>
    </source>
</evidence>
<accession>P48346</accession>
<organism>
    <name type="scientific">Mus musculus</name>
    <name type="common">Mouse</name>
    <dbReference type="NCBI Taxonomy" id="10090"/>
    <lineage>
        <taxon>Eukaryota</taxon>
        <taxon>Metazoa</taxon>
        <taxon>Chordata</taxon>
        <taxon>Craniata</taxon>
        <taxon>Vertebrata</taxon>
        <taxon>Euteleostomi</taxon>
        <taxon>Mammalia</taxon>
        <taxon>Eutheria</taxon>
        <taxon>Euarchontoglires</taxon>
        <taxon>Glires</taxon>
        <taxon>Rodentia</taxon>
        <taxon>Myomorpha</taxon>
        <taxon>Muroidea</taxon>
        <taxon>Muridae</taxon>
        <taxon>Murinae</taxon>
        <taxon>Mus</taxon>
        <taxon>Mus</taxon>
    </lineage>
</organism>
<gene>
    <name type="primary">Il15</name>
</gene>
<protein>
    <recommendedName>
        <fullName>Interleukin-15</fullName>
        <shortName>IL-15</shortName>
    </recommendedName>
</protein>